<accession>A6N6J0</accession>
<feature type="signal peptide" evidence="2">
    <location>
        <begin position="1"/>
        <end position="22"/>
    </location>
</feature>
<feature type="propeptide" id="PRO_0000429892" evidence="1">
    <location>
        <begin position="23"/>
        <end position="35"/>
    </location>
</feature>
<feature type="chain" id="PRO_0000429893" description="Endochitinase 46">
    <location>
        <begin position="36"/>
        <end position="430"/>
    </location>
</feature>
<feature type="domain" description="GH18" evidence="3">
    <location>
        <begin position="39"/>
        <end position="408"/>
    </location>
</feature>
<feature type="active site" description="Proton donor" evidence="3">
    <location>
        <position position="172"/>
    </location>
</feature>
<feature type="binding site" evidence="3">
    <location>
        <begin position="103"/>
        <end position="104"/>
    </location>
    <ligand>
        <name>chitin</name>
        <dbReference type="ChEBI" id="CHEBI:17029"/>
    </ligand>
</feature>
<feature type="binding site" evidence="3">
    <location>
        <begin position="130"/>
        <end position="133"/>
    </location>
    <ligand>
        <name>chitin</name>
        <dbReference type="ChEBI" id="CHEBI:17029"/>
    </ligand>
</feature>
<feature type="binding site" evidence="3">
    <location>
        <position position="173"/>
    </location>
    <ligand>
        <name>chitin</name>
        <dbReference type="ChEBI" id="CHEBI:17029"/>
    </ligand>
</feature>
<feature type="binding site" evidence="3">
    <location>
        <begin position="238"/>
        <end position="241"/>
    </location>
    <ligand>
        <name>chitin</name>
        <dbReference type="ChEBI" id="CHEBI:17029"/>
    </ligand>
</feature>
<feature type="binding site" evidence="3">
    <location>
        <position position="385"/>
    </location>
    <ligand>
        <name>chitin</name>
        <dbReference type="ChEBI" id="CHEBI:17029"/>
    </ligand>
</feature>
<feature type="glycosylation site" description="N-linked (GlcNAc...) asparagine" evidence="2">
    <location>
        <position position="219"/>
    </location>
</feature>
<sequence>MLSFLGKSVALLAALQATLSSASPLATEERSIEKRANGYANSVYFTNWGIYDRNFQPADLVASDVTHVIYSFMNLQADGTVVSGDTYADFEKHYADDSWNDVGTNAYGCAKQLFKVKKANRGLKVLLSIGGWTWSTNFPSAASTDANRKNFAKTAITFMKDWGFDGIDVDWEYPADATQASNMVLLLKEVRSQLDAYAAQYAPGYHFLLTIAAPAGKDNYSKLRLADLGQVLDYINLMAYDYAGSFSPLTGHDANLFANPSNPNATPFNTDSAVKDYIKGGVPANKIVLGMPIYGRSFQNTAGIGQTYNGVGGGGGGSTGSWEAGIWDYKALPKAGATIQYDSVAKGYYSYNAGTKELISFDTPDMINTKVAYLKSLGLGGSMFWEASADKKGADSLIGTSHRALGGLDTTQNLLSYPNSKYDNIRNGLN</sequence>
<keyword id="KW-0119">Carbohydrate metabolism</keyword>
<keyword id="KW-0146">Chitin degradation</keyword>
<keyword id="KW-0147">Chitin-binding</keyword>
<keyword id="KW-0165">Cleavage on pair of basic residues</keyword>
<keyword id="KW-0325">Glycoprotein</keyword>
<keyword id="KW-0326">Glycosidase</keyword>
<keyword id="KW-0378">Hydrolase</keyword>
<keyword id="KW-0624">Polysaccharide degradation</keyword>
<keyword id="KW-0964">Secreted</keyword>
<keyword id="KW-0732">Signal</keyword>
<keyword id="KW-0865">Zymogen</keyword>
<evidence type="ECO:0000250" key="1"/>
<evidence type="ECO:0000255" key="2"/>
<evidence type="ECO:0000255" key="3">
    <source>
        <dbReference type="PROSITE-ProRule" id="PRU01258"/>
    </source>
</evidence>
<evidence type="ECO:0000269" key="4">
    <source>
    </source>
</evidence>
<evidence type="ECO:0000305" key="5"/>
<reference key="1">
    <citation type="submission" date="2007-05" db="EMBL/GenBank/DDBJ databases">
        <title>Cloning and functional characterization of endochitinase gene from Trichoderma spp.</title>
        <authorList>
            <person name="Bhat G.S."/>
            <person name="Bhat S."/>
            <person name="Kuruvinashetti M.S."/>
        </authorList>
    </citation>
    <scope>NUCLEOTIDE SEQUENCE [GENOMIC DNA]</scope>
    <source>
        <strain>IABT1015</strain>
    </source>
</reference>
<reference key="2">
    <citation type="journal article" date="2010" name="Curr. Microbiol.">
        <title>New insights in Trichoderma harzianum antagonism of fungal plant pathogens by secreted protein analysis.</title>
        <authorList>
            <person name="Monteiro V.N."/>
            <person name="do Nascimento Silva R."/>
            <person name="Steindorff A.S."/>
            <person name="Costa F.T."/>
            <person name="Noronha E.F."/>
            <person name="Ricart C.A."/>
            <person name="de Sousa M.V."/>
            <person name="Vainstein M.H."/>
            <person name="Ulhoa C.J."/>
        </authorList>
    </citation>
    <scope>IDENTIFICATION BY MASS SPECTROMETRY</scope>
    <scope>SUBCELLULAR LOCATION</scope>
    <scope>FUNCTION</scope>
    <scope>BIOTECHNOLOGY</scope>
</reference>
<organism>
    <name type="scientific">Trichoderma harzianum</name>
    <name type="common">Hypocrea lixii</name>
    <dbReference type="NCBI Taxonomy" id="5544"/>
    <lineage>
        <taxon>Eukaryota</taxon>
        <taxon>Fungi</taxon>
        <taxon>Dikarya</taxon>
        <taxon>Ascomycota</taxon>
        <taxon>Pezizomycotina</taxon>
        <taxon>Sordariomycetes</taxon>
        <taxon>Hypocreomycetidae</taxon>
        <taxon>Hypocreales</taxon>
        <taxon>Hypocreaceae</taxon>
        <taxon>Trichoderma</taxon>
    </lineage>
</organism>
<protein>
    <recommendedName>
        <fullName>Endochitinase 46</fullName>
        <ecNumber>3.2.1.14</ecNumber>
    </recommendedName>
    <alternativeName>
        <fullName>46 kDa endochitinase</fullName>
    </alternativeName>
    <alternativeName>
        <fullName>Chitinase 46</fullName>
    </alternativeName>
</protein>
<gene>
    <name type="primary">chit46</name>
</gene>
<proteinExistence type="evidence at protein level"/>
<comment type="function">
    <text evidence="4">Secreted chitinase involved in the degradation of chitin, a component of the cell walls of fungi and exoskeletal elements of some animals (including worms and arthropods). Plays a morphogenetic role during apical growth, cell division and differentiation (cell wall morphogenesis). Also acts as an antifungal agent. Involved in the degradation and further assimilation of phytopathogenic fungi, namely mycoparasitism, the major mechanism accounting for the antagonistic activity against phytopathogenic fungi displayed by Trichoderma.</text>
</comment>
<comment type="catalytic activity">
    <reaction>
        <text>Random endo-hydrolysis of N-acetyl-beta-D-glucosaminide (1-&gt;4)-beta-linkages in chitin and chitodextrins.</text>
        <dbReference type="EC" id="3.2.1.14"/>
    </reaction>
</comment>
<comment type="subcellular location">
    <subcellularLocation>
        <location evidence="4">Secreted</location>
    </subcellularLocation>
</comment>
<comment type="biotechnology">
    <text evidence="4">The antagonistic activity of Trichoderma harzianum is used for the control of several soil borne plant pathogenic fungi.</text>
</comment>
<comment type="similarity">
    <text evidence="5">Belongs to the glycosyl hydrolase 18 family. Chitinase class V subfamily.</text>
</comment>
<name>CHI46_TRIHA</name>
<dbReference type="EC" id="3.2.1.14"/>
<dbReference type="EMBL" id="EF613224">
    <property type="protein sequence ID" value="ABR21205.1"/>
    <property type="molecule type" value="Genomic_DNA"/>
</dbReference>
<dbReference type="SMR" id="A6N6J0"/>
<dbReference type="CAZy" id="GH18">
    <property type="family name" value="Glycoside Hydrolase Family 18"/>
</dbReference>
<dbReference type="GlyCosmos" id="A6N6J0">
    <property type="glycosylation" value="1 site, No reported glycans"/>
</dbReference>
<dbReference type="GO" id="GO:0005576">
    <property type="term" value="C:extracellular region"/>
    <property type="evidence" value="ECO:0007669"/>
    <property type="project" value="UniProtKB-SubCell"/>
</dbReference>
<dbReference type="GO" id="GO:0008061">
    <property type="term" value="F:chitin binding"/>
    <property type="evidence" value="ECO:0007669"/>
    <property type="project" value="UniProtKB-KW"/>
</dbReference>
<dbReference type="GO" id="GO:0008843">
    <property type="term" value="F:endochitinase activity"/>
    <property type="evidence" value="ECO:0007669"/>
    <property type="project" value="UniProtKB-EC"/>
</dbReference>
<dbReference type="GO" id="GO:0006032">
    <property type="term" value="P:chitin catabolic process"/>
    <property type="evidence" value="ECO:0007669"/>
    <property type="project" value="UniProtKB-KW"/>
</dbReference>
<dbReference type="GO" id="GO:0000272">
    <property type="term" value="P:polysaccharide catabolic process"/>
    <property type="evidence" value="ECO:0007669"/>
    <property type="project" value="UniProtKB-KW"/>
</dbReference>
<dbReference type="CDD" id="cd06548">
    <property type="entry name" value="GH18_chitinase"/>
    <property type="match status" value="1"/>
</dbReference>
<dbReference type="FunFam" id="3.10.50.10:FF:000005">
    <property type="entry name" value="Endochitinase B1"/>
    <property type="match status" value="1"/>
</dbReference>
<dbReference type="FunFam" id="3.20.20.80:FF:000075">
    <property type="entry name" value="Sporulation-specific chitinase"/>
    <property type="match status" value="1"/>
</dbReference>
<dbReference type="Gene3D" id="3.10.50.10">
    <property type="match status" value="1"/>
</dbReference>
<dbReference type="Gene3D" id="3.20.20.80">
    <property type="entry name" value="Glycosidases"/>
    <property type="match status" value="1"/>
</dbReference>
<dbReference type="InterPro" id="IPR011583">
    <property type="entry name" value="Chitinase_II/V-like_cat"/>
</dbReference>
<dbReference type="InterPro" id="IPR029070">
    <property type="entry name" value="Chitinase_insertion_sf"/>
</dbReference>
<dbReference type="InterPro" id="IPR001223">
    <property type="entry name" value="Glyco_hydro18_cat"/>
</dbReference>
<dbReference type="InterPro" id="IPR001579">
    <property type="entry name" value="Glyco_hydro_18_chit_AS"/>
</dbReference>
<dbReference type="InterPro" id="IPR017853">
    <property type="entry name" value="Glycoside_hydrolase_SF"/>
</dbReference>
<dbReference type="InterPro" id="IPR050314">
    <property type="entry name" value="Glycosyl_Hydrlase_18"/>
</dbReference>
<dbReference type="PANTHER" id="PTHR11177">
    <property type="entry name" value="CHITINASE"/>
    <property type="match status" value="1"/>
</dbReference>
<dbReference type="PANTHER" id="PTHR11177:SF317">
    <property type="entry name" value="CHITINASE 12-RELATED"/>
    <property type="match status" value="1"/>
</dbReference>
<dbReference type="Pfam" id="PF00704">
    <property type="entry name" value="Glyco_hydro_18"/>
    <property type="match status" value="1"/>
</dbReference>
<dbReference type="SMART" id="SM00636">
    <property type="entry name" value="Glyco_18"/>
    <property type="match status" value="1"/>
</dbReference>
<dbReference type="SUPFAM" id="SSF51445">
    <property type="entry name" value="(Trans)glycosidases"/>
    <property type="match status" value="1"/>
</dbReference>
<dbReference type="SUPFAM" id="SSF54556">
    <property type="entry name" value="Chitinase insertion domain"/>
    <property type="match status" value="1"/>
</dbReference>
<dbReference type="PROSITE" id="PS01095">
    <property type="entry name" value="GH18_1"/>
    <property type="match status" value="1"/>
</dbReference>
<dbReference type="PROSITE" id="PS51910">
    <property type="entry name" value="GH18_2"/>
    <property type="match status" value="1"/>
</dbReference>